<proteinExistence type="inferred from homology"/>
<reference key="1">
    <citation type="journal article" date="2004" name="Nat. Genet.">
        <title>Comparison of genome degradation in Paratyphi A and Typhi, human-restricted serovars of Salmonella enterica that cause typhoid.</title>
        <authorList>
            <person name="McClelland M."/>
            <person name="Sanderson K.E."/>
            <person name="Clifton S.W."/>
            <person name="Latreille P."/>
            <person name="Porwollik S."/>
            <person name="Sabo A."/>
            <person name="Meyer R."/>
            <person name="Bieri T."/>
            <person name="Ozersky P."/>
            <person name="McLellan M."/>
            <person name="Harkins C.R."/>
            <person name="Wang C."/>
            <person name="Nguyen C."/>
            <person name="Berghoff A."/>
            <person name="Elliott G."/>
            <person name="Kohlberg S."/>
            <person name="Strong C."/>
            <person name="Du F."/>
            <person name="Carter J."/>
            <person name="Kremizki C."/>
            <person name="Layman D."/>
            <person name="Leonard S."/>
            <person name="Sun H."/>
            <person name="Fulton L."/>
            <person name="Nash W."/>
            <person name="Miner T."/>
            <person name="Minx P."/>
            <person name="Delehaunty K."/>
            <person name="Fronick C."/>
            <person name="Magrini V."/>
            <person name="Nhan M."/>
            <person name="Warren W."/>
            <person name="Florea L."/>
            <person name="Spieth J."/>
            <person name="Wilson R.K."/>
        </authorList>
    </citation>
    <scope>NUCLEOTIDE SEQUENCE [LARGE SCALE GENOMIC DNA]</scope>
    <source>
        <strain>ATCC 9150 / SARB42</strain>
    </source>
</reference>
<accession>Q5PD56</accession>
<comment type="function">
    <text evidence="1">Modifies, by uridylylation and deuridylylation, the PII regulatory proteins (GlnB and homologs), in response to the nitrogen status of the cell that GlnD senses through the glutamine level. Under low glutamine levels, catalyzes the conversion of the PII proteins and UTP to PII-UMP and PPi, while under higher glutamine levels, GlnD hydrolyzes PII-UMP to PII and UMP (deuridylylation). Thus, controls uridylylation state and activity of the PII proteins, and plays an important role in the regulation of nitrogen assimilation and metabolism.</text>
</comment>
<comment type="catalytic activity">
    <reaction evidence="1">
        <text>[protein-PII]-L-tyrosine + UTP = [protein-PII]-uridylyl-L-tyrosine + diphosphate</text>
        <dbReference type="Rhea" id="RHEA:13673"/>
        <dbReference type="Rhea" id="RHEA-COMP:12147"/>
        <dbReference type="Rhea" id="RHEA-COMP:12148"/>
        <dbReference type="ChEBI" id="CHEBI:33019"/>
        <dbReference type="ChEBI" id="CHEBI:46398"/>
        <dbReference type="ChEBI" id="CHEBI:46858"/>
        <dbReference type="ChEBI" id="CHEBI:90602"/>
        <dbReference type="EC" id="2.7.7.59"/>
    </reaction>
</comment>
<comment type="catalytic activity">
    <reaction evidence="1">
        <text>[protein-PII]-uridylyl-L-tyrosine + H2O = [protein-PII]-L-tyrosine + UMP + H(+)</text>
        <dbReference type="Rhea" id="RHEA:48600"/>
        <dbReference type="Rhea" id="RHEA-COMP:12147"/>
        <dbReference type="Rhea" id="RHEA-COMP:12148"/>
        <dbReference type="ChEBI" id="CHEBI:15377"/>
        <dbReference type="ChEBI" id="CHEBI:15378"/>
        <dbReference type="ChEBI" id="CHEBI:46858"/>
        <dbReference type="ChEBI" id="CHEBI:57865"/>
        <dbReference type="ChEBI" id="CHEBI:90602"/>
    </reaction>
</comment>
<comment type="cofactor">
    <cofactor evidence="1">
        <name>Mg(2+)</name>
        <dbReference type="ChEBI" id="CHEBI:18420"/>
    </cofactor>
</comment>
<comment type="activity regulation">
    <text evidence="1">Uridylyltransferase (UTase) activity is inhibited by glutamine, while glutamine activates uridylyl-removing (UR) activity.</text>
</comment>
<comment type="domain">
    <text evidence="1">Has four distinct domains: an N-terminal nucleotidyltransferase (NT) domain responsible for UTase activity, a central HD domain that encodes UR activity, and two C-terminal ACT domains that seem to have a role in glutamine sensing.</text>
</comment>
<comment type="similarity">
    <text evidence="1">Belongs to the GlnD family.</text>
</comment>
<sequence length="890" mass="102278">MNTLPEQHANTALPTLPDQPQNPGVWPRAELTVAGIKARIDIFQHWLGEAFDSGICAEQLIEARTEFIDQLLQRLWIEAGFGQIADLALVAVGGYGRGELHPLSDIDLLILSRKKLPDEQAQKVGELLTLLWDVKLDVGHSVRTLEECLLEGLSDLTVATNLIETRLLIGDVALFLALQKHIFSEGFWPSDKFYAAKVEEQNQRHQRYHGTSYNLEPDIKSSPGGLRDIHTLQWVARRHFGATSLDEMVGFGFLTPAERAELNECLHILWRIRFALHLVVSRYDNRLLFDRQLSVAQRLNYSGEGNDPVERMMKDYFRVTRRVSELNQMLLQLFDEAILALPADEKPRPVDDEFQLRGTLIDLRDDTLFIREPQAILRMFYMMVRNSAITGIYSTTLRHLRHARRHLSQPLCYIPEARTLFLSMLRHPGAVSRGLLPMHRHSVLWAYMPQWSHIVGQMQFDLFHAYTVDEHTIRVMLKLESFAKEETRQRHPLCVDLWPRLPHPELILIAALFHDIAKGRGGDHSVLGAQDVLTFAELHGLNSRETQLVAWLVRQHLLMSVTAQRRDIQDPEVIKQFAEEVQTETRLRFLVCLTVADICATNETLWNSWKQSLLRELYFATEKQLRRGMQNTPDMRERVRHHQLQALALLRMDNIDEAALHKIWTRCRANYFVRHSPNQLAWHARHLLQHDLRQPLVLLSPQATRGGTEIFIWSPDRPYLFAAVCAELDRRNLSVHDAQIFTTRDGMAMDTFIVLEPDGSPLAADRHEVIRTGLEQTITQRSWQPPQPRRQPAKLRHFTVETEVNFLPTHTDRKSFMELIALDQPGLLARVGQIFADLGISLHGARITTIGERVEDLFIIATADRRALNNVLQLEVQQRLTAALNPNDKG</sequence>
<gene>
    <name evidence="1" type="primary">glnD</name>
    <name type="ordered locus">SPA0220</name>
</gene>
<keyword id="KW-0378">Hydrolase</keyword>
<keyword id="KW-0460">Magnesium</keyword>
<keyword id="KW-0511">Multifunctional enzyme</keyword>
<keyword id="KW-0548">Nucleotidyltransferase</keyword>
<keyword id="KW-0677">Repeat</keyword>
<keyword id="KW-0808">Transferase</keyword>
<name>GLND_SALPA</name>
<feature type="chain" id="PRO_0000192764" description="Bifunctional uridylyltransferase/uridylyl-removing enzyme">
    <location>
        <begin position="1"/>
        <end position="890"/>
    </location>
</feature>
<feature type="domain" description="HD" evidence="2">
    <location>
        <begin position="468"/>
        <end position="590"/>
    </location>
</feature>
<feature type="domain" description="ACT 1" evidence="1">
    <location>
        <begin position="709"/>
        <end position="784"/>
    </location>
</feature>
<feature type="domain" description="ACT 2" evidence="1">
    <location>
        <begin position="816"/>
        <end position="890"/>
    </location>
</feature>
<feature type="region of interest" description="Uridylyltransferase">
    <location>
        <begin position="1"/>
        <end position="349"/>
    </location>
</feature>
<feature type="region of interest" description="Disordered" evidence="3">
    <location>
        <begin position="1"/>
        <end position="21"/>
    </location>
</feature>
<feature type="region of interest" description="Uridylyl-removing">
    <location>
        <begin position="350"/>
        <end position="708"/>
    </location>
</feature>
<evidence type="ECO:0000255" key="1">
    <source>
        <dbReference type="HAMAP-Rule" id="MF_00277"/>
    </source>
</evidence>
<evidence type="ECO:0000255" key="2">
    <source>
        <dbReference type="PROSITE-ProRule" id="PRU01175"/>
    </source>
</evidence>
<evidence type="ECO:0000256" key="3">
    <source>
        <dbReference type="SAM" id="MobiDB-lite"/>
    </source>
</evidence>
<organism>
    <name type="scientific">Salmonella paratyphi A (strain ATCC 9150 / SARB42)</name>
    <dbReference type="NCBI Taxonomy" id="295319"/>
    <lineage>
        <taxon>Bacteria</taxon>
        <taxon>Pseudomonadati</taxon>
        <taxon>Pseudomonadota</taxon>
        <taxon>Gammaproteobacteria</taxon>
        <taxon>Enterobacterales</taxon>
        <taxon>Enterobacteriaceae</taxon>
        <taxon>Salmonella</taxon>
    </lineage>
</organism>
<dbReference type="EC" id="2.7.7.59" evidence="1"/>
<dbReference type="EC" id="3.1.4.-" evidence="1"/>
<dbReference type="EMBL" id="CP000026">
    <property type="protein sequence ID" value="AAV76250.1"/>
    <property type="molecule type" value="Genomic_DNA"/>
</dbReference>
<dbReference type="RefSeq" id="WP_001094520.1">
    <property type="nucleotide sequence ID" value="NC_006511.1"/>
</dbReference>
<dbReference type="SMR" id="Q5PD56"/>
<dbReference type="KEGG" id="spt:SPA0220"/>
<dbReference type="HOGENOM" id="CLU_012833_0_0_6"/>
<dbReference type="Proteomes" id="UP000008185">
    <property type="component" value="Chromosome"/>
</dbReference>
<dbReference type="GO" id="GO:0008773">
    <property type="term" value="F:[protein-PII] uridylyltransferase activity"/>
    <property type="evidence" value="ECO:0007669"/>
    <property type="project" value="UniProtKB-UniRule"/>
</dbReference>
<dbReference type="GO" id="GO:0008081">
    <property type="term" value="F:phosphoric diester hydrolase activity"/>
    <property type="evidence" value="ECO:0007669"/>
    <property type="project" value="UniProtKB-UniRule"/>
</dbReference>
<dbReference type="GO" id="GO:0006808">
    <property type="term" value="P:regulation of nitrogen utilization"/>
    <property type="evidence" value="ECO:0007669"/>
    <property type="project" value="UniProtKB-UniRule"/>
</dbReference>
<dbReference type="CDD" id="cd04899">
    <property type="entry name" value="ACT_ACR-UUR-like_2"/>
    <property type="match status" value="1"/>
</dbReference>
<dbReference type="CDD" id="cd04900">
    <property type="entry name" value="ACT_UUR-like_1"/>
    <property type="match status" value="1"/>
</dbReference>
<dbReference type="CDD" id="cd00077">
    <property type="entry name" value="HDc"/>
    <property type="match status" value="1"/>
</dbReference>
<dbReference type="CDD" id="cd05401">
    <property type="entry name" value="NT_GlnE_GlnD_like"/>
    <property type="match status" value="1"/>
</dbReference>
<dbReference type="FunFam" id="1.10.3210.10:FF:000005">
    <property type="entry name" value="Bifunctional uridylyltransferase/uridylyl-removing enzyme"/>
    <property type="match status" value="1"/>
</dbReference>
<dbReference type="Gene3D" id="1.10.3210.10">
    <property type="entry name" value="Hypothetical protein af1432"/>
    <property type="match status" value="1"/>
</dbReference>
<dbReference type="Gene3D" id="1.20.120.330">
    <property type="entry name" value="Nucleotidyltransferases domain 2"/>
    <property type="match status" value="1"/>
</dbReference>
<dbReference type="HAMAP" id="MF_00277">
    <property type="entry name" value="PII_uridylyl_transf"/>
    <property type="match status" value="1"/>
</dbReference>
<dbReference type="InterPro" id="IPR045865">
    <property type="entry name" value="ACT-like_dom_sf"/>
</dbReference>
<dbReference type="InterPro" id="IPR002912">
    <property type="entry name" value="ACT_dom"/>
</dbReference>
<dbReference type="InterPro" id="IPR003607">
    <property type="entry name" value="HD/PDEase_dom"/>
</dbReference>
<dbReference type="InterPro" id="IPR006674">
    <property type="entry name" value="HD_domain"/>
</dbReference>
<dbReference type="InterPro" id="IPR043519">
    <property type="entry name" value="NT_sf"/>
</dbReference>
<dbReference type="InterPro" id="IPR013546">
    <property type="entry name" value="PII_UdlTrfase/GS_AdlTrfase"/>
</dbReference>
<dbReference type="InterPro" id="IPR002934">
    <property type="entry name" value="Polymerase_NTP_transf_dom"/>
</dbReference>
<dbReference type="InterPro" id="IPR010043">
    <property type="entry name" value="UTase/UR"/>
</dbReference>
<dbReference type="NCBIfam" id="NF002487">
    <property type="entry name" value="PRK01759.1"/>
    <property type="match status" value="1"/>
</dbReference>
<dbReference type="NCBIfam" id="NF003448">
    <property type="entry name" value="PRK05007.1"/>
    <property type="match status" value="1"/>
</dbReference>
<dbReference type="NCBIfam" id="TIGR01693">
    <property type="entry name" value="UTase_glnD"/>
    <property type="match status" value="1"/>
</dbReference>
<dbReference type="PANTHER" id="PTHR47320">
    <property type="entry name" value="BIFUNCTIONAL URIDYLYLTRANSFERASE/URIDYLYL-REMOVING ENZYME"/>
    <property type="match status" value="1"/>
</dbReference>
<dbReference type="PANTHER" id="PTHR47320:SF1">
    <property type="entry name" value="BIFUNCTIONAL URIDYLYLTRANSFERASE_URIDYLYL-REMOVING ENZYME"/>
    <property type="match status" value="1"/>
</dbReference>
<dbReference type="Pfam" id="PF01842">
    <property type="entry name" value="ACT"/>
    <property type="match status" value="2"/>
</dbReference>
<dbReference type="Pfam" id="PF08335">
    <property type="entry name" value="GlnD_UR_UTase"/>
    <property type="match status" value="1"/>
</dbReference>
<dbReference type="Pfam" id="PF01966">
    <property type="entry name" value="HD"/>
    <property type="match status" value="1"/>
</dbReference>
<dbReference type="Pfam" id="PF01909">
    <property type="entry name" value="NTP_transf_2"/>
    <property type="match status" value="1"/>
</dbReference>
<dbReference type="PIRSF" id="PIRSF006288">
    <property type="entry name" value="PII_uridyltransf"/>
    <property type="match status" value="1"/>
</dbReference>
<dbReference type="SMART" id="SM00471">
    <property type="entry name" value="HDc"/>
    <property type="match status" value="1"/>
</dbReference>
<dbReference type="SUPFAM" id="SSF55021">
    <property type="entry name" value="ACT-like"/>
    <property type="match status" value="2"/>
</dbReference>
<dbReference type="SUPFAM" id="SSF109604">
    <property type="entry name" value="HD-domain/PDEase-like"/>
    <property type="match status" value="1"/>
</dbReference>
<dbReference type="SUPFAM" id="SSF81301">
    <property type="entry name" value="Nucleotidyltransferase"/>
    <property type="match status" value="1"/>
</dbReference>
<dbReference type="SUPFAM" id="SSF81593">
    <property type="entry name" value="Nucleotidyltransferase substrate binding subunit/domain"/>
    <property type="match status" value="1"/>
</dbReference>
<dbReference type="PROSITE" id="PS51671">
    <property type="entry name" value="ACT"/>
    <property type="match status" value="2"/>
</dbReference>
<dbReference type="PROSITE" id="PS51831">
    <property type="entry name" value="HD"/>
    <property type="match status" value="1"/>
</dbReference>
<protein>
    <recommendedName>
        <fullName evidence="1">Bifunctional uridylyltransferase/uridylyl-removing enzyme</fullName>
        <shortName evidence="1">UTase/UR</shortName>
    </recommendedName>
    <alternativeName>
        <fullName evidence="1">Bifunctional [protein-PII] modification enzyme</fullName>
    </alternativeName>
    <alternativeName>
        <fullName evidence="1">Bifunctional nitrogen sensor protein</fullName>
    </alternativeName>
    <domain>
        <recommendedName>
            <fullName evidence="1">[Protein-PII] uridylyltransferase</fullName>
            <shortName evidence="1">PII uridylyltransferase</shortName>
            <shortName evidence="1">UTase</shortName>
            <ecNumber evidence="1">2.7.7.59</ecNumber>
        </recommendedName>
    </domain>
    <domain>
        <recommendedName>
            <fullName evidence="1">[Protein-PII]-UMP uridylyl-removing enzyme</fullName>
            <shortName evidence="1">UR</shortName>
            <ecNumber evidence="1">3.1.4.-</ecNumber>
        </recommendedName>
    </domain>
</protein>